<comment type="function">
    <text evidence="3 6">Lipoamide dehydrogenase is a component of the glycine cleavage system as well as an E3 component of three alpha-ketoacid dehydrogenase complexes (pyruvate-, alpha-ketoglutarate-, and branched-chain amino acid-dehydrogenase complex). The 2-oxoglutarate dehydrogenase complex is mainly active in the mitochondrion. A fraction of the 2-oxoglutarate dehydrogenase complex also localizes in the nucleus and is required for lysine succinylation of histones: associates with KAT2A on chromatin and provides succinyl-CoA to histone succinyltransferase KAT2A. In monomeric form may have additional moonlighting function as serine protease (By similarity). Involved in the hyperactivation of spermatazoa during capacitation and in the spermatazoal acrosome reaction (By similarity).</text>
</comment>
<comment type="catalytic activity">
    <reaction evidence="3">
        <text>N(6)-[(R)-dihydrolipoyl]-L-lysyl-[protein] + NAD(+) = N(6)-[(R)-lipoyl]-L-lysyl-[protein] + NADH + H(+)</text>
        <dbReference type="Rhea" id="RHEA:15045"/>
        <dbReference type="Rhea" id="RHEA-COMP:10474"/>
        <dbReference type="Rhea" id="RHEA-COMP:10475"/>
        <dbReference type="ChEBI" id="CHEBI:15378"/>
        <dbReference type="ChEBI" id="CHEBI:57540"/>
        <dbReference type="ChEBI" id="CHEBI:57945"/>
        <dbReference type="ChEBI" id="CHEBI:83099"/>
        <dbReference type="ChEBI" id="CHEBI:83100"/>
        <dbReference type="EC" id="1.8.1.4"/>
    </reaction>
</comment>
<comment type="cofactor">
    <cofactor evidence="3">
        <name>FAD</name>
        <dbReference type="ChEBI" id="CHEBI:57692"/>
    </cofactor>
    <text evidence="3">Binds 1 FAD per subunit.</text>
</comment>
<comment type="subunit">
    <text evidence="2 3">Homodimer. Part of the multimeric pyruvate dehydrogenase complex that contains multiple copies of pyruvate dehydrogenase (subunits PDHA (PDHA1 or PDHA2) and PDHB, E1), dihydrolipoamide acetyltransferase (DLAT, E2) and lipoamide dehydrogenase (DLD, E3). These subunits are bound to an inner core composed of about 48 DLAT and 12 PDHX molecules (by non covalent bonds). The 2-oxoglutarate dehydrogenase complex is composed of OGDH (2-oxoglutarate dehydrogenase; E1), DLST (dihydrolipoamide succinyltransferase; E2), DLD (dihydrolipoamide dehydrogenase; E3) and the assembly factor KGD4 (By similarity). It contains multiple copies of the three enzymatic components (E1, E2 and E3). In the nucleus, the 2-oxoglutarate dehydrogenase complex associates with KAT2A. Interacts with PDHX.</text>
</comment>
<comment type="subcellular location">
    <subcellularLocation>
        <location evidence="3">Mitochondrion matrix</location>
    </subcellularLocation>
    <subcellularLocation>
        <location evidence="3">Nucleus</location>
    </subcellularLocation>
    <subcellularLocation>
        <location evidence="6">Cell projection</location>
        <location evidence="6">Cilium</location>
        <location evidence="6">Flagellum</location>
    </subcellularLocation>
    <subcellularLocation>
        <location evidence="3">Cytoplasmic vesicle</location>
        <location evidence="3">Secretory vesicle</location>
        <location evidence="3">Acrosome</location>
    </subcellularLocation>
    <text evidence="3">Mainly localizes in the mitochondrion. A small fraction localizes to the nucleus, where the 2-oxoglutarate dehydrogenase complex is required for histone succinylation.</text>
</comment>
<comment type="PTM">
    <text evidence="6">Tyrosine phosphorylated.</text>
</comment>
<comment type="miscellaneous">
    <text evidence="4">The active site is a redox-active disulfide bond.</text>
</comment>
<comment type="similarity">
    <text evidence="7">Belongs to the class-I pyridine nucleotide-disulfide oxidoreductase family.</text>
</comment>
<organism>
    <name type="scientific">Pongo abelii</name>
    <name type="common">Sumatran orangutan</name>
    <name type="synonym">Pongo pygmaeus abelii</name>
    <dbReference type="NCBI Taxonomy" id="9601"/>
    <lineage>
        <taxon>Eukaryota</taxon>
        <taxon>Metazoa</taxon>
        <taxon>Chordata</taxon>
        <taxon>Craniata</taxon>
        <taxon>Vertebrata</taxon>
        <taxon>Euteleostomi</taxon>
        <taxon>Mammalia</taxon>
        <taxon>Eutheria</taxon>
        <taxon>Euarchontoglires</taxon>
        <taxon>Primates</taxon>
        <taxon>Haplorrhini</taxon>
        <taxon>Catarrhini</taxon>
        <taxon>Hominidae</taxon>
        <taxon>Pongo</taxon>
    </lineage>
</organism>
<feature type="transit peptide" description="Mitochondrion" evidence="1">
    <location>
        <begin position="1"/>
        <end position="35"/>
    </location>
</feature>
<feature type="chain" id="PRO_0000260227" description="Dihydrolipoyl dehydrogenase, mitochondrial">
    <location>
        <begin position="36"/>
        <end position="509"/>
    </location>
</feature>
<feature type="active site" description="Proton acceptor" evidence="4">
    <location>
        <position position="487"/>
    </location>
</feature>
<feature type="binding site" evidence="3">
    <location>
        <begin position="71"/>
        <end position="80"/>
    </location>
    <ligand>
        <name>FAD</name>
        <dbReference type="ChEBI" id="CHEBI:57692"/>
    </ligand>
</feature>
<feature type="binding site" evidence="3">
    <location>
        <position position="89"/>
    </location>
    <ligand>
        <name>FAD</name>
        <dbReference type="ChEBI" id="CHEBI:57692"/>
    </ligand>
</feature>
<feature type="binding site" evidence="3">
    <location>
        <position position="154"/>
    </location>
    <ligand>
        <name>FAD</name>
        <dbReference type="ChEBI" id="CHEBI:57692"/>
    </ligand>
</feature>
<feature type="binding site" evidence="3">
    <location>
        <begin position="183"/>
        <end position="185"/>
    </location>
    <ligand>
        <name>FAD</name>
        <dbReference type="ChEBI" id="CHEBI:57692"/>
    </ligand>
</feature>
<feature type="binding site" evidence="3">
    <location>
        <begin position="220"/>
        <end position="227"/>
    </location>
    <ligand>
        <name>NAD(+)</name>
        <dbReference type="ChEBI" id="CHEBI:57540"/>
    </ligand>
</feature>
<feature type="binding site" evidence="3">
    <location>
        <position position="243"/>
    </location>
    <ligand>
        <name>NAD(+)</name>
        <dbReference type="ChEBI" id="CHEBI:57540"/>
    </ligand>
</feature>
<feature type="binding site" evidence="3">
    <location>
        <position position="278"/>
    </location>
    <ligand>
        <name>NAD(+)</name>
        <dbReference type="ChEBI" id="CHEBI:57540"/>
    </ligand>
</feature>
<feature type="binding site" evidence="3">
    <location>
        <position position="314"/>
    </location>
    <ligand>
        <name>NAD(+)</name>
        <dbReference type="ChEBI" id="CHEBI:57540"/>
    </ligand>
</feature>
<feature type="binding site" evidence="3">
    <location>
        <position position="355"/>
    </location>
    <ligand>
        <name>FAD</name>
        <dbReference type="ChEBI" id="CHEBI:57692"/>
    </ligand>
</feature>
<feature type="binding site" evidence="3">
    <location>
        <begin position="361"/>
        <end position="364"/>
    </location>
    <ligand>
        <name>FAD</name>
        <dbReference type="ChEBI" id="CHEBI:57692"/>
    </ligand>
</feature>
<feature type="site" description="Important for interaction with PDHX and activity of pyruvate dehydrogenase complex" evidence="3">
    <location>
        <position position="448"/>
    </location>
</feature>
<feature type="site" description="Important for interaction with PDHX and activity of pyruvate dehydrogenase complex" evidence="3">
    <location>
        <position position="473"/>
    </location>
</feature>
<feature type="modified residue" description="N6-acetyllysine; alternate" evidence="2">
    <location>
        <position position="66"/>
    </location>
</feature>
<feature type="modified residue" description="N6-succinyllysine; alternate" evidence="2">
    <location>
        <position position="66"/>
    </location>
</feature>
<feature type="modified residue" description="N6-acetyllysine; alternate" evidence="2">
    <location>
        <position position="104"/>
    </location>
</feature>
<feature type="modified residue" description="N6-succinyllysine; alternate" evidence="2">
    <location>
        <position position="104"/>
    </location>
</feature>
<feature type="modified residue" description="N6-acetyllysine; alternate" evidence="2">
    <location>
        <position position="122"/>
    </location>
</feature>
<feature type="modified residue" description="N6-succinyllysine; alternate" evidence="2">
    <location>
        <position position="122"/>
    </location>
</feature>
<feature type="modified residue" description="N6-acetyllysine; alternate" evidence="2">
    <location>
        <position position="132"/>
    </location>
</feature>
<feature type="modified residue" description="N6-succinyllysine; alternate" evidence="2">
    <location>
        <position position="132"/>
    </location>
</feature>
<feature type="modified residue" description="N6-acetyllysine; alternate" evidence="3">
    <location>
        <position position="143"/>
    </location>
</feature>
<feature type="modified residue" description="N6-succinyllysine; alternate" evidence="2">
    <location>
        <position position="143"/>
    </location>
</feature>
<feature type="modified residue" description="N6-succinyllysine" evidence="2">
    <location>
        <position position="159"/>
    </location>
</feature>
<feature type="modified residue" description="N6-succinyllysine" evidence="2">
    <location>
        <position position="166"/>
    </location>
</feature>
<feature type="modified residue" description="N6-succinyllysine" evidence="2">
    <location>
        <position position="273"/>
    </location>
</feature>
<feature type="modified residue" description="N6-succinyllysine" evidence="2">
    <location>
        <position position="277"/>
    </location>
</feature>
<feature type="modified residue" description="Phosphoserine" evidence="2">
    <location>
        <position position="285"/>
    </location>
</feature>
<feature type="modified residue" description="Phosphoserine" evidence="5">
    <location>
        <position position="297"/>
    </location>
</feature>
<feature type="modified residue" description="N6-acetyllysine" evidence="2">
    <location>
        <position position="346"/>
    </location>
</feature>
<feature type="modified residue" description="N6-acetyllysine; alternate" evidence="3">
    <location>
        <position position="410"/>
    </location>
</feature>
<feature type="modified residue" description="N6-succinyllysine; alternate" evidence="2">
    <location>
        <position position="410"/>
    </location>
</feature>
<feature type="modified residue" description="N6-acetyllysine" evidence="3">
    <location>
        <position position="417"/>
    </location>
</feature>
<feature type="modified residue" description="N6-acetyllysine" evidence="2">
    <location>
        <position position="420"/>
    </location>
</feature>
<feature type="modified residue" description="N6-succinyllysine" evidence="2">
    <location>
        <position position="430"/>
    </location>
</feature>
<feature type="modified residue" description="Phosphoserine" evidence="3">
    <location>
        <position position="502"/>
    </location>
</feature>
<feature type="modified residue" description="N6-acetyllysine; alternate" evidence="2">
    <location>
        <position position="505"/>
    </location>
</feature>
<feature type="modified residue" description="N6-succinyllysine; alternate" evidence="2">
    <location>
        <position position="505"/>
    </location>
</feature>
<feature type="disulfide bond" description="Redox-active" evidence="4">
    <location>
        <begin position="80"/>
        <end position="85"/>
    </location>
</feature>
<proteinExistence type="evidence at transcript level"/>
<dbReference type="EC" id="1.8.1.4" evidence="3"/>
<dbReference type="EMBL" id="CR861344">
    <property type="protein sequence ID" value="CAH93405.1"/>
    <property type="molecule type" value="mRNA"/>
</dbReference>
<dbReference type="RefSeq" id="NP_001126999.1">
    <property type="nucleotide sequence ID" value="NM_001133527.1"/>
</dbReference>
<dbReference type="SMR" id="Q5R4B1"/>
<dbReference type="STRING" id="9601.ENSPPYP00000020072"/>
<dbReference type="GeneID" id="100189862"/>
<dbReference type="CTD" id="1738"/>
<dbReference type="eggNOG" id="KOG1335">
    <property type="taxonomic scope" value="Eukaryota"/>
</dbReference>
<dbReference type="InParanoid" id="Q5R4B1"/>
<dbReference type="Proteomes" id="UP000001595">
    <property type="component" value="Unplaced"/>
</dbReference>
<dbReference type="GO" id="GO:0001669">
    <property type="term" value="C:acrosomal vesicle"/>
    <property type="evidence" value="ECO:0007669"/>
    <property type="project" value="UniProtKB-SubCell"/>
</dbReference>
<dbReference type="GO" id="GO:0005759">
    <property type="term" value="C:mitochondrial matrix"/>
    <property type="evidence" value="ECO:0007669"/>
    <property type="project" value="UniProtKB-SubCell"/>
</dbReference>
<dbReference type="GO" id="GO:0005739">
    <property type="term" value="C:mitochondrion"/>
    <property type="evidence" value="ECO:0000250"/>
    <property type="project" value="UniProtKB"/>
</dbReference>
<dbReference type="GO" id="GO:0031514">
    <property type="term" value="C:motile cilium"/>
    <property type="evidence" value="ECO:0007669"/>
    <property type="project" value="UniProtKB-SubCell"/>
</dbReference>
<dbReference type="GO" id="GO:0005634">
    <property type="term" value="C:nucleus"/>
    <property type="evidence" value="ECO:0000250"/>
    <property type="project" value="UniProtKB"/>
</dbReference>
<dbReference type="GO" id="GO:0045252">
    <property type="term" value="C:oxoglutarate dehydrogenase complex"/>
    <property type="evidence" value="ECO:0000250"/>
    <property type="project" value="UniProtKB"/>
</dbReference>
<dbReference type="GO" id="GO:0004148">
    <property type="term" value="F:dihydrolipoyl dehydrogenase (NADH) activity"/>
    <property type="evidence" value="ECO:0000250"/>
    <property type="project" value="UniProtKB"/>
</dbReference>
<dbReference type="GO" id="GO:0050660">
    <property type="term" value="F:flavin adenine dinucleotide binding"/>
    <property type="evidence" value="ECO:0007669"/>
    <property type="project" value="InterPro"/>
</dbReference>
<dbReference type="GO" id="GO:0006103">
    <property type="term" value="P:2-oxoglutarate metabolic process"/>
    <property type="evidence" value="ECO:0007669"/>
    <property type="project" value="TreeGrafter"/>
</dbReference>
<dbReference type="FunFam" id="3.30.390.30:FF:000001">
    <property type="entry name" value="Dihydrolipoyl dehydrogenase"/>
    <property type="match status" value="1"/>
</dbReference>
<dbReference type="FunFam" id="3.50.50.60:FF:000025">
    <property type="entry name" value="Dihydrolipoyl dehydrogenase"/>
    <property type="match status" value="1"/>
</dbReference>
<dbReference type="FunFam" id="3.50.50.60:FF:000221">
    <property type="entry name" value="Dihydrolipoyl dehydrogenase, mitochondrial"/>
    <property type="match status" value="1"/>
</dbReference>
<dbReference type="Gene3D" id="3.30.390.30">
    <property type="match status" value="1"/>
</dbReference>
<dbReference type="Gene3D" id="3.50.50.60">
    <property type="entry name" value="FAD/NAD(P)-binding domain"/>
    <property type="match status" value="2"/>
</dbReference>
<dbReference type="InterPro" id="IPR050151">
    <property type="entry name" value="Class-I_Pyr_Nuc-Dis_Oxidored"/>
</dbReference>
<dbReference type="InterPro" id="IPR036188">
    <property type="entry name" value="FAD/NAD-bd_sf"/>
</dbReference>
<dbReference type="InterPro" id="IPR023753">
    <property type="entry name" value="FAD/NAD-binding_dom"/>
</dbReference>
<dbReference type="InterPro" id="IPR016156">
    <property type="entry name" value="FAD/NAD-linked_Rdtase_dimer_sf"/>
</dbReference>
<dbReference type="InterPro" id="IPR006258">
    <property type="entry name" value="Lipoamide_DH"/>
</dbReference>
<dbReference type="InterPro" id="IPR001100">
    <property type="entry name" value="Pyr_nuc-diS_OxRdtase"/>
</dbReference>
<dbReference type="InterPro" id="IPR004099">
    <property type="entry name" value="Pyr_nucl-diS_OxRdtase_dimer"/>
</dbReference>
<dbReference type="InterPro" id="IPR012999">
    <property type="entry name" value="Pyr_OxRdtase_I_AS"/>
</dbReference>
<dbReference type="NCBIfam" id="TIGR01350">
    <property type="entry name" value="lipoamide_DH"/>
    <property type="match status" value="1"/>
</dbReference>
<dbReference type="PANTHER" id="PTHR22912:SF151">
    <property type="entry name" value="DIHYDROLIPOYL DEHYDROGENASE, MITOCHONDRIAL"/>
    <property type="match status" value="1"/>
</dbReference>
<dbReference type="PANTHER" id="PTHR22912">
    <property type="entry name" value="DISULFIDE OXIDOREDUCTASE"/>
    <property type="match status" value="1"/>
</dbReference>
<dbReference type="Pfam" id="PF07992">
    <property type="entry name" value="Pyr_redox_2"/>
    <property type="match status" value="1"/>
</dbReference>
<dbReference type="Pfam" id="PF02852">
    <property type="entry name" value="Pyr_redox_dim"/>
    <property type="match status" value="1"/>
</dbReference>
<dbReference type="PIRSF" id="PIRSF000350">
    <property type="entry name" value="Mercury_reductase_MerA"/>
    <property type="match status" value="1"/>
</dbReference>
<dbReference type="PRINTS" id="PR00368">
    <property type="entry name" value="FADPNR"/>
</dbReference>
<dbReference type="PRINTS" id="PR00411">
    <property type="entry name" value="PNDRDTASEI"/>
</dbReference>
<dbReference type="SUPFAM" id="SSF51905">
    <property type="entry name" value="FAD/NAD(P)-binding domain"/>
    <property type="match status" value="1"/>
</dbReference>
<dbReference type="SUPFAM" id="SSF55424">
    <property type="entry name" value="FAD/NAD-linked reductases, dimerisation (C-terminal) domain"/>
    <property type="match status" value="1"/>
</dbReference>
<dbReference type="PROSITE" id="PS00076">
    <property type="entry name" value="PYRIDINE_REDOX_1"/>
    <property type="match status" value="1"/>
</dbReference>
<sequence>MQSWSRVYCSLAKRGHFNRISHGLQGLSAVPLRTYADQPIDADVTVIGSGPGGYVAAIKAAQLGFKTVCVEKNETLGGTCLNVGCIPSKALLNNSHYYHMAHGKDFASRGIEMSEVRLNLDKMMEQKSTAVKALTGGIAHLFKQNKVVHVNGYGKITGKNQVTATKADGGTQVIDTKNILIATGSEVTPFPGIMIDEDTIVSSTGALSLKKVPEKMVVIGAGVIGVELGSVWQRLGADVTAVEFLGHVGGVGIDMEISKNFQRILQKQGFKFKLNTKVTGATKKSDGKIDVSIEAASGGKAEVITCDVLLVCIGRRPFTKNLGLEELGIELDPRGRIPVNTRFQTKIPNIYAIGDVVAGPMLAHKAEDEGIICVEGMAGGAVHIDYNCVPSVIYTHPEVAWVGKSEEQLKEEGIEYKVGKFPFAANSRAKTNADTDGMVKILGQKSTDRVLGAHILGPGAGGMVNEAALALEYGASCEDIARVCHAHPTLSEAFREANLAASFGKSINF</sequence>
<keyword id="KW-0007">Acetylation</keyword>
<keyword id="KW-0966">Cell projection</keyword>
<keyword id="KW-0969">Cilium</keyword>
<keyword id="KW-0968">Cytoplasmic vesicle</keyword>
<keyword id="KW-1015">Disulfide bond</keyword>
<keyword id="KW-0274">FAD</keyword>
<keyword id="KW-0282">Flagellum</keyword>
<keyword id="KW-0285">Flavoprotein</keyword>
<keyword id="KW-0496">Mitochondrion</keyword>
<keyword id="KW-0520">NAD</keyword>
<keyword id="KW-0539">Nucleus</keyword>
<keyword id="KW-0560">Oxidoreductase</keyword>
<keyword id="KW-0597">Phosphoprotein</keyword>
<keyword id="KW-0676">Redox-active center</keyword>
<keyword id="KW-1185">Reference proteome</keyword>
<keyword id="KW-0809">Transit peptide</keyword>
<reference key="1">
    <citation type="submission" date="2004-11" db="EMBL/GenBank/DDBJ databases">
        <authorList>
            <consortium name="The German cDNA consortium"/>
        </authorList>
    </citation>
    <scope>NUCLEOTIDE SEQUENCE [LARGE SCALE MRNA]</scope>
    <source>
        <tissue>Brain cortex</tissue>
    </source>
</reference>
<protein>
    <recommendedName>
        <fullName>Dihydrolipoyl dehydrogenase, mitochondrial</fullName>
        <ecNumber evidence="3">1.8.1.4</ecNumber>
    </recommendedName>
    <alternativeName>
        <fullName>Dihydrolipoamide dehydrogenase</fullName>
    </alternativeName>
</protein>
<name>DLDH_PONAB</name>
<gene>
    <name type="primary">DLD</name>
</gene>
<evidence type="ECO:0000250" key="1"/>
<evidence type="ECO:0000250" key="2">
    <source>
        <dbReference type="UniProtKB" id="O08749"/>
    </source>
</evidence>
<evidence type="ECO:0000250" key="3">
    <source>
        <dbReference type="UniProtKB" id="P09622"/>
    </source>
</evidence>
<evidence type="ECO:0000250" key="4">
    <source>
        <dbReference type="UniProtKB" id="P09624"/>
    </source>
</evidence>
<evidence type="ECO:0000250" key="5">
    <source>
        <dbReference type="UniProtKB" id="Q6P6R2"/>
    </source>
</evidence>
<evidence type="ECO:0000250" key="6">
    <source>
        <dbReference type="UniProtKB" id="Q811C4"/>
    </source>
</evidence>
<evidence type="ECO:0000305" key="7"/>
<accession>Q5R4B1</accession>